<organism>
    <name type="scientific">Bacillus subtilis (strain 168)</name>
    <dbReference type="NCBI Taxonomy" id="224308"/>
    <lineage>
        <taxon>Bacteria</taxon>
        <taxon>Bacillati</taxon>
        <taxon>Bacillota</taxon>
        <taxon>Bacilli</taxon>
        <taxon>Bacillales</taxon>
        <taxon>Bacillaceae</taxon>
        <taxon>Bacillus</taxon>
    </lineage>
</organism>
<proteinExistence type="predicted"/>
<reference key="1">
    <citation type="submission" date="1996-03" db="EMBL/GenBank/DDBJ databases">
        <authorList>
            <person name="Krogh S."/>
            <person name="O'Reilly M."/>
            <person name="Nolan N."/>
            <person name="Devine K.M."/>
        </authorList>
    </citation>
    <scope>NUCLEOTIDE SEQUENCE [GENOMIC DNA]</scope>
    <source>
        <strain>168</strain>
    </source>
</reference>
<reference key="2">
    <citation type="journal article" date="1997" name="Nature">
        <title>The complete genome sequence of the Gram-positive bacterium Bacillus subtilis.</title>
        <authorList>
            <person name="Kunst F."/>
            <person name="Ogasawara N."/>
            <person name="Moszer I."/>
            <person name="Albertini A.M."/>
            <person name="Alloni G."/>
            <person name="Azevedo V."/>
            <person name="Bertero M.G."/>
            <person name="Bessieres P."/>
            <person name="Bolotin A."/>
            <person name="Borchert S."/>
            <person name="Borriss R."/>
            <person name="Boursier L."/>
            <person name="Brans A."/>
            <person name="Braun M."/>
            <person name="Brignell S.C."/>
            <person name="Bron S."/>
            <person name="Brouillet S."/>
            <person name="Bruschi C.V."/>
            <person name="Caldwell B."/>
            <person name="Capuano V."/>
            <person name="Carter N.M."/>
            <person name="Choi S.-K."/>
            <person name="Codani J.-J."/>
            <person name="Connerton I.F."/>
            <person name="Cummings N.J."/>
            <person name="Daniel R.A."/>
            <person name="Denizot F."/>
            <person name="Devine K.M."/>
            <person name="Duesterhoeft A."/>
            <person name="Ehrlich S.D."/>
            <person name="Emmerson P.T."/>
            <person name="Entian K.-D."/>
            <person name="Errington J."/>
            <person name="Fabret C."/>
            <person name="Ferrari E."/>
            <person name="Foulger D."/>
            <person name="Fritz C."/>
            <person name="Fujita M."/>
            <person name="Fujita Y."/>
            <person name="Fuma S."/>
            <person name="Galizzi A."/>
            <person name="Galleron N."/>
            <person name="Ghim S.-Y."/>
            <person name="Glaser P."/>
            <person name="Goffeau A."/>
            <person name="Golightly E.J."/>
            <person name="Grandi G."/>
            <person name="Guiseppi G."/>
            <person name="Guy B.J."/>
            <person name="Haga K."/>
            <person name="Haiech J."/>
            <person name="Harwood C.R."/>
            <person name="Henaut A."/>
            <person name="Hilbert H."/>
            <person name="Holsappel S."/>
            <person name="Hosono S."/>
            <person name="Hullo M.-F."/>
            <person name="Itaya M."/>
            <person name="Jones L.-M."/>
            <person name="Joris B."/>
            <person name="Karamata D."/>
            <person name="Kasahara Y."/>
            <person name="Klaerr-Blanchard M."/>
            <person name="Klein C."/>
            <person name="Kobayashi Y."/>
            <person name="Koetter P."/>
            <person name="Koningstein G."/>
            <person name="Krogh S."/>
            <person name="Kumano M."/>
            <person name="Kurita K."/>
            <person name="Lapidus A."/>
            <person name="Lardinois S."/>
            <person name="Lauber J."/>
            <person name="Lazarevic V."/>
            <person name="Lee S.-M."/>
            <person name="Levine A."/>
            <person name="Liu H."/>
            <person name="Masuda S."/>
            <person name="Mauel C."/>
            <person name="Medigue C."/>
            <person name="Medina N."/>
            <person name="Mellado R.P."/>
            <person name="Mizuno M."/>
            <person name="Moestl D."/>
            <person name="Nakai S."/>
            <person name="Noback M."/>
            <person name="Noone D."/>
            <person name="O'Reilly M."/>
            <person name="Ogawa K."/>
            <person name="Ogiwara A."/>
            <person name="Oudega B."/>
            <person name="Park S.-H."/>
            <person name="Parro V."/>
            <person name="Pohl T.M."/>
            <person name="Portetelle D."/>
            <person name="Porwollik S."/>
            <person name="Prescott A.M."/>
            <person name="Presecan E."/>
            <person name="Pujic P."/>
            <person name="Purnelle B."/>
            <person name="Rapoport G."/>
            <person name="Rey M."/>
            <person name="Reynolds S."/>
            <person name="Rieger M."/>
            <person name="Rivolta C."/>
            <person name="Rocha E."/>
            <person name="Roche B."/>
            <person name="Rose M."/>
            <person name="Sadaie Y."/>
            <person name="Sato T."/>
            <person name="Scanlan E."/>
            <person name="Schleich S."/>
            <person name="Schroeter R."/>
            <person name="Scoffone F."/>
            <person name="Sekiguchi J."/>
            <person name="Sekowska A."/>
            <person name="Seror S.J."/>
            <person name="Serror P."/>
            <person name="Shin B.-S."/>
            <person name="Soldo B."/>
            <person name="Sorokin A."/>
            <person name="Tacconi E."/>
            <person name="Takagi T."/>
            <person name="Takahashi H."/>
            <person name="Takemaru K."/>
            <person name="Takeuchi M."/>
            <person name="Tamakoshi A."/>
            <person name="Tanaka T."/>
            <person name="Terpstra P."/>
            <person name="Tognoni A."/>
            <person name="Tosato V."/>
            <person name="Uchiyama S."/>
            <person name="Vandenbol M."/>
            <person name="Vannier F."/>
            <person name="Vassarotti A."/>
            <person name="Viari A."/>
            <person name="Wambutt R."/>
            <person name="Wedler E."/>
            <person name="Wedler H."/>
            <person name="Weitzenegger T."/>
            <person name="Winters P."/>
            <person name="Wipat A."/>
            <person name="Yamamoto H."/>
            <person name="Yamane K."/>
            <person name="Yasumoto K."/>
            <person name="Yata K."/>
            <person name="Yoshida K."/>
            <person name="Yoshikawa H.-F."/>
            <person name="Zumstein E."/>
            <person name="Yoshikawa H."/>
            <person name="Danchin A."/>
        </authorList>
    </citation>
    <scope>NUCLEOTIDE SEQUENCE [LARGE SCALE GENOMIC DNA]</scope>
    <source>
        <strain>168</strain>
    </source>
</reference>
<keyword id="KW-1185">Reference proteome</keyword>
<comment type="similarity">
    <text evidence="1">To B.subtilis YqbJ.</text>
</comment>
<name>XKDJ_BACSU</name>
<feature type="chain" id="PRO_0000066024" description="Phage-like element PBSX protein XkdJ">
    <location>
        <begin position="1"/>
        <end position="146"/>
    </location>
</feature>
<sequence>MNSETGSIMAFLYSRWSVPIYERELPDHFQVPSLYVPPPSVFEETDTVSTFKKTYSLNVKLFHLDSVQALDEADRLADAIREARNMIPLLSESGEKTGDMVRISQIETRVGDRGEAAMVIRWSSRYYYHKTEQPVLQDIDMNSGVK</sequence>
<accession>P54330</accession>
<dbReference type="EMBL" id="Z70177">
    <property type="protein sequence ID" value="CAA94065.1"/>
    <property type="molecule type" value="Genomic_DNA"/>
</dbReference>
<dbReference type="EMBL" id="AL009126">
    <property type="protein sequence ID" value="CAB13121.1"/>
    <property type="molecule type" value="Genomic_DNA"/>
</dbReference>
<dbReference type="PIR" id="B69732">
    <property type="entry name" value="B69732"/>
</dbReference>
<dbReference type="RefSeq" id="NP_389146.1">
    <property type="nucleotide sequence ID" value="NC_000964.3"/>
</dbReference>
<dbReference type="RefSeq" id="WP_003232680.1">
    <property type="nucleotide sequence ID" value="NZ_OZ025638.1"/>
</dbReference>
<dbReference type="FunCoup" id="P54330">
    <property type="interactions" value="39"/>
</dbReference>
<dbReference type="STRING" id="224308.BSU12640"/>
<dbReference type="PaxDb" id="224308-BSU12640"/>
<dbReference type="EnsemblBacteria" id="CAB13121">
    <property type="protein sequence ID" value="CAB13121"/>
    <property type="gene ID" value="BSU_12640"/>
</dbReference>
<dbReference type="GeneID" id="936496"/>
<dbReference type="KEGG" id="bsu:BSU12640"/>
<dbReference type="PATRIC" id="fig|224308.179.peg.1369"/>
<dbReference type="eggNOG" id="ENOG502ZK27">
    <property type="taxonomic scope" value="Bacteria"/>
</dbReference>
<dbReference type="InParanoid" id="P54330"/>
<dbReference type="OrthoDB" id="2899407at2"/>
<dbReference type="BioCyc" id="BSUB:BSU12640-MONOMER"/>
<dbReference type="Proteomes" id="UP000001570">
    <property type="component" value="Chromosome"/>
</dbReference>
<evidence type="ECO:0000305" key="1"/>
<gene>
    <name type="primary">xkdJ</name>
    <name type="ordered locus">BSU12640</name>
</gene>
<protein>
    <recommendedName>
        <fullName>Phage-like element PBSX protein XkdJ</fullName>
    </recommendedName>
</protein>